<dbReference type="EMBL" id="CR380956">
    <property type="protein sequence ID" value="CAG60877.1"/>
    <property type="molecule type" value="Genomic_DNA"/>
</dbReference>
<dbReference type="RefSeq" id="XP_447928.1">
    <property type="nucleotide sequence ID" value="XM_447928.1"/>
</dbReference>
<dbReference type="SMR" id="Q6FPB6"/>
<dbReference type="FunCoup" id="Q6FPB6">
    <property type="interactions" value="127"/>
</dbReference>
<dbReference type="STRING" id="284593.Q6FPB6"/>
<dbReference type="EnsemblFungi" id="CAGL0J05104g-T">
    <property type="protein sequence ID" value="CAGL0J05104g-T-p1"/>
    <property type="gene ID" value="CAGL0J05104g"/>
</dbReference>
<dbReference type="KEGG" id="cgr:2889499"/>
<dbReference type="CGD" id="CAL0133534">
    <property type="gene designation" value="CAGL0J05104g"/>
</dbReference>
<dbReference type="VEuPathDB" id="FungiDB:CAGL0J05104g"/>
<dbReference type="eggNOG" id="KOG3880">
    <property type="taxonomic scope" value="Eukaryota"/>
</dbReference>
<dbReference type="HOGENOM" id="CLU_029663_1_2_1"/>
<dbReference type="InParanoid" id="Q6FPB6"/>
<dbReference type="OMA" id="WLCNWQV"/>
<dbReference type="Proteomes" id="UP000002428">
    <property type="component" value="Chromosome J"/>
</dbReference>
<dbReference type="GO" id="GO:0000324">
    <property type="term" value="C:fungal-type vacuole"/>
    <property type="evidence" value="ECO:0007669"/>
    <property type="project" value="EnsemblFungi"/>
</dbReference>
<dbReference type="GO" id="GO:0005774">
    <property type="term" value="C:vacuolar membrane"/>
    <property type="evidence" value="ECO:0007669"/>
    <property type="project" value="UniProtKB-SubCell"/>
</dbReference>
<dbReference type="GO" id="GO:1903826">
    <property type="term" value="P:L-arginine transmembrane transport"/>
    <property type="evidence" value="ECO:0007669"/>
    <property type="project" value="EnsemblFungi"/>
</dbReference>
<dbReference type="GO" id="GO:0015819">
    <property type="term" value="P:lysine transport"/>
    <property type="evidence" value="ECO:0007669"/>
    <property type="project" value="EnsemblFungi"/>
</dbReference>
<dbReference type="GO" id="GO:0051453">
    <property type="term" value="P:regulation of intracellular pH"/>
    <property type="evidence" value="ECO:0007669"/>
    <property type="project" value="EnsemblFungi"/>
</dbReference>
<dbReference type="Gene3D" id="1.20.1250.20">
    <property type="entry name" value="MFS general substrate transporter like domains"/>
    <property type="match status" value="1"/>
</dbReference>
<dbReference type="InterPro" id="IPR003492">
    <property type="entry name" value="Battenin_disease_Cln3"/>
</dbReference>
<dbReference type="InterPro" id="IPR018460">
    <property type="entry name" value="Battenin_disease_Cln3_subgr"/>
</dbReference>
<dbReference type="InterPro" id="IPR036259">
    <property type="entry name" value="MFS_trans_sf"/>
</dbReference>
<dbReference type="PANTHER" id="PTHR10981">
    <property type="entry name" value="BATTENIN"/>
    <property type="match status" value="1"/>
</dbReference>
<dbReference type="PANTHER" id="PTHR10981:SF0">
    <property type="entry name" value="BATTENIN"/>
    <property type="match status" value="1"/>
</dbReference>
<dbReference type="Pfam" id="PF02487">
    <property type="entry name" value="CLN3"/>
    <property type="match status" value="1"/>
</dbReference>
<dbReference type="PIRSF" id="PIRSF015974">
    <property type="entry name" value="CLN3_BTN1"/>
    <property type="match status" value="1"/>
</dbReference>
<dbReference type="PRINTS" id="PR01315">
    <property type="entry name" value="BATTENIN"/>
</dbReference>
<dbReference type="SUPFAM" id="SSF103473">
    <property type="entry name" value="MFS general substrate transporter"/>
    <property type="match status" value="1"/>
</dbReference>
<comment type="function">
    <text evidence="1">Involved in vacuolar transport and vacuole pH homeostasis. Also required for cytokinesis (By similarity).</text>
</comment>
<comment type="subcellular location">
    <subcellularLocation>
        <location evidence="1">Vacuole membrane</location>
        <topology evidence="1">Multi-pass membrane protein</topology>
    </subcellularLocation>
</comment>
<comment type="similarity">
    <text evidence="3">Belongs to the battenin family.</text>
</comment>
<gene>
    <name type="primary">BTN1</name>
    <name type="ordered locus">CAGL0J05104g</name>
</gene>
<keyword id="KW-0029">Amino-acid transport</keyword>
<keyword id="KW-0472">Membrane</keyword>
<keyword id="KW-1185">Reference proteome</keyword>
<keyword id="KW-0732">Signal</keyword>
<keyword id="KW-0812">Transmembrane</keyword>
<keyword id="KW-1133">Transmembrane helix</keyword>
<keyword id="KW-0813">Transport</keyword>
<keyword id="KW-0926">Vacuole</keyword>
<organism>
    <name type="scientific">Candida glabrata (strain ATCC 2001 / BCRC 20586 / JCM 3761 / NBRC 0622 / NRRL Y-65 / CBS 138)</name>
    <name type="common">Yeast</name>
    <name type="synonym">Nakaseomyces glabratus</name>
    <dbReference type="NCBI Taxonomy" id="284593"/>
    <lineage>
        <taxon>Eukaryota</taxon>
        <taxon>Fungi</taxon>
        <taxon>Dikarya</taxon>
        <taxon>Ascomycota</taxon>
        <taxon>Saccharomycotina</taxon>
        <taxon>Saccharomycetes</taxon>
        <taxon>Saccharomycetales</taxon>
        <taxon>Saccharomycetaceae</taxon>
        <taxon>Nakaseomyces</taxon>
    </lineage>
</organism>
<sequence length="411" mass="45826">MNSKQRVYAFFWIFGLVNNVLYVVILSAAVDIVGPKVPKTLVLLMDITPSLLIKVTAPFFIKSIPYTMRIYALIALSCIGMIFVSGKSLLLCMIGIAMASVSSGFGEVSFLQLSHFFEENALNGWSSGTGGAGIVGSSVYMLLTSIFKLPIRLSLLSFTILPFAFLLYFKLDTTQIEYDSISSSGEETLIRNSNSNALQTDTFNESIRLSKTEEQNIFVSSIDHFKSTCVNLKALVVPYMLPLSSVYLFEYLINQAVSPTLLFPLDSRGLPPFFNKYRDMYVTYGTLYQLGVFISRSLAHKFRMHNLYFLSALQGLNLVLTILQAWIYIVHTPWPIMILIFYEGLLGGSSYVNTFLNVLEEVDMDKREFSLGAVSIADSLGVFIAALVGLGLEPTICNHQVSTGRPWCRME</sequence>
<name>BTN1_CANGA</name>
<reference key="1">
    <citation type="journal article" date="2004" name="Nature">
        <title>Genome evolution in yeasts.</title>
        <authorList>
            <person name="Dujon B."/>
            <person name="Sherman D."/>
            <person name="Fischer G."/>
            <person name="Durrens P."/>
            <person name="Casaregola S."/>
            <person name="Lafontaine I."/>
            <person name="de Montigny J."/>
            <person name="Marck C."/>
            <person name="Neuveglise C."/>
            <person name="Talla E."/>
            <person name="Goffard N."/>
            <person name="Frangeul L."/>
            <person name="Aigle M."/>
            <person name="Anthouard V."/>
            <person name="Babour A."/>
            <person name="Barbe V."/>
            <person name="Barnay S."/>
            <person name="Blanchin S."/>
            <person name="Beckerich J.-M."/>
            <person name="Beyne E."/>
            <person name="Bleykasten C."/>
            <person name="Boisrame A."/>
            <person name="Boyer J."/>
            <person name="Cattolico L."/>
            <person name="Confanioleri F."/>
            <person name="de Daruvar A."/>
            <person name="Despons L."/>
            <person name="Fabre E."/>
            <person name="Fairhead C."/>
            <person name="Ferry-Dumazet H."/>
            <person name="Groppi A."/>
            <person name="Hantraye F."/>
            <person name="Hennequin C."/>
            <person name="Jauniaux N."/>
            <person name="Joyet P."/>
            <person name="Kachouri R."/>
            <person name="Kerrest A."/>
            <person name="Koszul R."/>
            <person name="Lemaire M."/>
            <person name="Lesur I."/>
            <person name="Ma L."/>
            <person name="Muller H."/>
            <person name="Nicaud J.-M."/>
            <person name="Nikolski M."/>
            <person name="Oztas S."/>
            <person name="Ozier-Kalogeropoulos O."/>
            <person name="Pellenz S."/>
            <person name="Potier S."/>
            <person name="Richard G.-F."/>
            <person name="Straub M.-L."/>
            <person name="Suleau A."/>
            <person name="Swennen D."/>
            <person name="Tekaia F."/>
            <person name="Wesolowski-Louvel M."/>
            <person name="Westhof E."/>
            <person name="Wirth B."/>
            <person name="Zeniou-Meyer M."/>
            <person name="Zivanovic Y."/>
            <person name="Bolotin-Fukuhara M."/>
            <person name="Thierry A."/>
            <person name="Bouchier C."/>
            <person name="Caudron B."/>
            <person name="Scarpelli C."/>
            <person name="Gaillardin C."/>
            <person name="Weissenbach J."/>
            <person name="Wincker P."/>
            <person name="Souciet J.-L."/>
        </authorList>
    </citation>
    <scope>NUCLEOTIDE SEQUENCE [LARGE SCALE GENOMIC DNA]</scope>
    <source>
        <strain>ATCC 2001 / BCRC 20586 / JCM 3761 / NBRC 0622 / NRRL Y-65 / CBS 138</strain>
    </source>
</reference>
<accession>Q6FPB6</accession>
<protein>
    <recommendedName>
        <fullName>Protein BTN1</fullName>
    </recommendedName>
</protein>
<proteinExistence type="inferred from homology"/>
<evidence type="ECO:0000250" key="1"/>
<evidence type="ECO:0000255" key="2"/>
<evidence type="ECO:0000305" key="3"/>
<feature type="signal peptide" evidence="2">
    <location>
        <begin position="1"/>
        <end position="29"/>
    </location>
</feature>
<feature type="chain" id="PRO_0000256258" description="Protein BTN1">
    <location>
        <begin position="30"/>
        <end position="411"/>
    </location>
</feature>
<feature type="transmembrane region" description="Helical" evidence="2">
    <location>
        <begin position="41"/>
        <end position="61"/>
    </location>
</feature>
<feature type="transmembrane region" description="Helical" evidence="2">
    <location>
        <begin position="79"/>
        <end position="99"/>
    </location>
</feature>
<feature type="transmembrane region" description="Helical" evidence="2">
    <location>
        <begin position="127"/>
        <end position="147"/>
    </location>
</feature>
<feature type="transmembrane region" description="Helical" evidence="2">
    <location>
        <begin position="149"/>
        <end position="169"/>
    </location>
</feature>
<feature type="transmembrane region" description="Helical" evidence="2">
    <location>
        <begin position="281"/>
        <end position="300"/>
    </location>
</feature>
<feature type="transmembrane region" description="Helical" evidence="2">
    <location>
        <begin position="307"/>
        <end position="329"/>
    </location>
</feature>
<feature type="transmembrane region" description="Helical" evidence="2">
    <location>
        <begin position="334"/>
        <end position="356"/>
    </location>
</feature>
<feature type="transmembrane region" description="Helical" evidence="2">
    <location>
        <begin position="371"/>
        <end position="391"/>
    </location>
</feature>